<sequence>MLDNVLRIATRQSPLALWQAHYVKDALMATHPGLTVELVPMVTRGDVILDTPLAKVGGKGLFVKELEIALLEKRADIAVHSMKDVPVAFPDGLGLVTICEREDPRDAFVSNKYHSLDDLPAGSIVGTSSLRRQCQLAERRPDLIIRSLRGNVGTRLGKLDNGDYDAIILAVAGLKRLGLESRIRTALPPDVSLPAVGQGAVGIECRLDDARTQALLAPLNHSQTALRVTAERAMNTRLEGGCQVPIGSYAEIINGEIWLRALVGAPDGSVMVRGERRGSPEQAEQMGISLAEELLENGARAILTEVYNGETPA</sequence>
<organism>
    <name type="scientific">Salmonella paratyphi A (strain ATCC 9150 / SARB42)</name>
    <dbReference type="NCBI Taxonomy" id="295319"/>
    <lineage>
        <taxon>Bacteria</taxon>
        <taxon>Pseudomonadati</taxon>
        <taxon>Pseudomonadota</taxon>
        <taxon>Gammaproteobacteria</taxon>
        <taxon>Enterobacterales</taxon>
        <taxon>Enterobacteriaceae</taxon>
        <taxon>Salmonella</taxon>
    </lineage>
</organism>
<feature type="chain" id="PRO_0000304270" description="Porphobilinogen deaminase">
    <location>
        <begin position="1"/>
        <end position="313"/>
    </location>
</feature>
<feature type="modified residue" description="S-(dipyrrolylmethanemethyl)cysteine" evidence="1">
    <location>
        <position position="242"/>
    </location>
</feature>
<name>HEM3_SALPA</name>
<evidence type="ECO:0000255" key="1">
    <source>
        <dbReference type="HAMAP-Rule" id="MF_00260"/>
    </source>
</evidence>
<dbReference type="EC" id="2.5.1.61" evidence="1"/>
<dbReference type="EMBL" id="CP000026">
    <property type="protein sequence ID" value="AAV79556.1"/>
    <property type="molecule type" value="Genomic_DNA"/>
</dbReference>
<dbReference type="RefSeq" id="WP_001521319.1">
    <property type="nucleotide sequence ID" value="NC_006511.1"/>
</dbReference>
<dbReference type="SMR" id="Q5PKL7"/>
<dbReference type="KEGG" id="spt:SPA3779"/>
<dbReference type="HOGENOM" id="CLU_019704_0_2_6"/>
<dbReference type="UniPathway" id="UPA00251">
    <property type="reaction ID" value="UER00319"/>
</dbReference>
<dbReference type="Proteomes" id="UP000008185">
    <property type="component" value="Chromosome"/>
</dbReference>
<dbReference type="GO" id="GO:0005737">
    <property type="term" value="C:cytoplasm"/>
    <property type="evidence" value="ECO:0007669"/>
    <property type="project" value="TreeGrafter"/>
</dbReference>
<dbReference type="GO" id="GO:0004418">
    <property type="term" value="F:hydroxymethylbilane synthase activity"/>
    <property type="evidence" value="ECO:0007669"/>
    <property type="project" value="UniProtKB-UniRule"/>
</dbReference>
<dbReference type="GO" id="GO:0006782">
    <property type="term" value="P:protoporphyrinogen IX biosynthetic process"/>
    <property type="evidence" value="ECO:0007669"/>
    <property type="project" value="UniProtKB-UniRule"/>
</dbReference>
<dbReference type="CDD" id="cd13646">
    <property type="entry name" value="PBP2_EcHMBS_like"/>
    <property type="match status" value="1"/>
</dbReference>
<dbReference type="FunFam" id="3.30.160.40:FF:000002">
    <property type="entry name" value="Porphobilinogen deaminase"/>
    <property type="match status" value="1"/>
</dbReference>
<dbReference type="FunFam" id="3.40.190.10:FF:000004">
    <property type="entry name" value="Porphobilinogen deaminase"/>
    <property type="match status" value="1"/>
</dbReference>
<dbReference type="FunFam" id="3.40.190.10:FF:000005">
    <property type="entry name" value="Porphobilinogen deaminase"/>
    <property type="match status" value="1"/>
</dbReference>
<dbReference type="Gene3D" id="3.40.190.10">
    <property type="entry name" value="Periplasmic binding protein-like II"/>
    <property type="match status" value="2"/>
</dbReference>
<dbReference type="Gene3D" id="3.30.160.40">
    <property type="entry name" value="Porphobilinogen deaminase, C-terminal domain"/>
    <property type="match status" value="1"/>
</dbReference>
<dbReference type="HAMAP" id="MF_00260">
    <property type="entry name" value="Porphobil_deam"/>
    <property type="match status" value="1"/>
</dbReference>
<dbReference type="InterPro" id="IPR000860">
    <property type="entry name" value="HemC"/>
</dbReference>
<dbReference type="InterPro" id="IPR022419">
    <property type="entry name" value="Porphobilin_deaminase_cofac_BS"/>
</dbReference>
<dbReference type="InterPro" id="IPR022417">
    <property type="entry name" value="Porphobilin_deaminase_N"/>
</dbReference>
<dbReference type="InterPro" id="IPR022418">
    <property type="entry name" value="Porphobilinogen_deaminase_C"/>
</dbReference>
<dbReference type="InterPro" id="IPR036803">
    <property type="entry name" value="Porphobilinogen_deaminase_C_sf"/>
</dbReference>
<dbReference type="NCBIfam" id="TIGR00212">
    <property type="entry name" value="hemC"/>
    <property type="match status" value="1"/>
</dbReference>
<dbReference type="PANTHER" id="PTHR11557">
    <property type="entry name" value="PORPHOBILINOGEN DEAMINASE"/>
    <property type="match status" value="1"/>
</dbReference>
<dbReference type="PANTHER" id="PTHR11557:SF0">
    <property type="entry name" value="PORPHOBILINOGEN DEAMINASE"/>
    <property type="match status" value="1"/>
</dbReference>
<dbReference type="Pfam" id="PF01379">
    <property type="entry name" value="Porphobil_deam"/>
    <property type="match status" value="1"/>
</dbReference>
<dbReference type="Pfam" id="PF03900">
    <property type="entry name" value="Porphobil_deamC"/>
    <property type="match status" value="1"/>
</dbReference>
<dbReference type="PIRSF" id="PIRSF001438">
    <property type="entry name" value="4pyrrol_synth_OHMeBilane_synth"/>
    <property type="match status" value="1"/>
</dbReference>
<dbReference type="PRINTS" id="PR00151">
    <property type="entry name" value="PORPHBDMNASE"/>
</dbReference>
<dbReference type="SUPFAM" id="SSF53850">
    <property type="entry name" value="Periplasmic binding protein-like II"/>
    <property type="match status" value="1"/>
</dbReference>
<dbReference type="SUPFAM" id="SSF54782">
    <property type="entry name" value="Porphobilinogen deaminase (hydroxymethylbilane synthase), C-terminal domain"/>
    <property type="match status" value="1"/>
</dbReference>
<dbReference type="PROSITE" id="PS00533">
    <property type="entry name" value="PORPHOBILINOGEN_DEAM"/>
    <property type="match status" value="1"/>
</dbReference>
<reference key="1">
    <citation type="journal article" date="2004" name="Nat. Genet.">
        <title>Comparison of genome degradation in Paratyphi A and Typhi, human-restricted serovars of Salmonella enterica that cause typhoid.</title>
        <authorList>
            <person name="McClelland M."/>
            <person name="Sanderson K.E."/>
            <person name="Clifton S.W."/>
            <person name="Latreille P."/>
            <person name="Porwollik S."/>
            <person name="Sabo A."/>
            <person name="Meyer R."/>
            <person name="Bieri T."/>
            <person name="Ozersky P."/>
            <person name="McLellan M."/>
            <person name="Harkins C.R."/>
            <person name="Wang C."/>
            <person name="Nguyen C."/>
            <person name="Berghoff A."/>
            <person name="Elliott G."/>
            <person name="Kohlberg S."/>
            <person name="Strong C."/>
            <person name="Du F."/>
            <person name="Carter J."/>
            <person name="Kremizki C."/>
            <person name="Layman D."/>
            <person name="Leonard S."/>
            <person name="Sun H."/>
            <person name="Fulton L."/>
            <person name="Nash W."/>
            <person name="Miner T."/>
            <person name="Minx P."/>
            <person name="Delehaunty K."/>
            <person name="Fronick C."/>
            <person name="Magrini V."/>
            <person name="Nhan M."/>
            <person name="Warren W."/>
            <person name="Florea L."/>
            <person name="Spieth J."/>
            <person name="Wilson R.K."/>
        </authorList>
    </citation>
    <scope>NUCLEOTIDE SEQUENCE [LARGE SCALE GENOMIC DNA]</scope>
    <source>
        <strain>ATCC 9150 / SARB42</strain>
    </source>
</reference>
<proteinExistence type="inferred from homology"/>
<comment type="function">
    <text evidence="1">Tetrapolymerization of the monopyrrole PBG into the hydroxymethylbilane pre-uroporphyrinogen in several discrete steps.</text>
</comment>
<comment type="catalytic activity">
    <reaction evidence="1">
        <text>4 porphobilinogen + H2O = hydroxymethylbilane + 4 NH4(+)</text>
        <dbReference type="Rhea" id="RHEA:13185"/>
        <dbReference type="ChEBI" id="CHEBI:15377"/>
        <dbReference type="ChEBI" id="CHEBI:28938"/>
        <dbReference type="ChEBI" id="CHEBI:57845"/>
        <dbReference type="ChEBI" id="CHEBI:58126"/>
        <dbReference type="EC" id="2.5.1.61"/>
    </reaction>
</comment>
<comment type="cofactor">
    <cofactor evidence="1">
        <name>dipyrromethane</name>
        <dbReference type="ChEBI" id="CHEBI:60342"/>
    </cofactor>
    <text evidence="1">Binds 1 dipyrromethane group covalently.</text>
</comment>
<comment type="pathway">
    <text evidence="1">Porphyrin-containing compound metabolism; protoporphyrin-IX biosynthesis; coproporphyrinogen-III from 5-aminolevulinate: step 2/4.</text>
</comment>
<comment type="subunit">
    <text evidence="1">Monomer.</text>
</comment>
<comment type="miscellaneous">
    <text evidence="1">The porphobilinogen subunits are added to the dipyrromethane group.</text>
</comment>
<comment type="similarity">
    <text evidence="1">Belongs to the HMBS family.</text>
</comment>
<keyword id="KW-0627">Porphyrin biosynthesis</keyword>
<keyword id="KW-0808">Transferase</keyword>
<gene>
    <name evidence="1" type="primary">hemC</name>
    <name type="ordered locus">SPA3779</name>
</gene>
<protein>
    <recommendedName>
        <fullName evidence="1">Porphobilinogen deaminase</fullName>
        <shortName evidence="1">PBG</shortName>
        <ecNumber evidence="1">2.5.1.61</ecNumber>
    </recommendedName>
    <alternativeName>
        <fullName evidence="1">Hydroxymethylbilane synthase</fullName>
        <shortName evidence="1">HMBS</shortName>
    </alternativeName>
    <alternativeName>
        <fullName evidence="1">Pre-uroporphyrinogen synthase</fullName>
    </alternativeName>
</protein>
<accession>Q5PKL7</accession>